<dbReference type="EC" id="2.1.1.163" evidence="1"/>
<dbReference type="EC" id="2.1.1.201" evidence="1"/>
<dbReference type="EMBL" id="BX571873">
    <property type="protein sequence ID" value="CAE16785.1"/>
    <property type="molecule type" value="Genomic_DNA"/>
</dbReference>
<dbReference type="RefSeq" id="WP_011148503.1">
    <property type="nucleotide sequence ID" value="NC_005126.1"/>
</dbReference>
<dbReference type="SMR" id="Q7MZ81"/>
<dbReference type="STRING" id="243265.plu4413"/>
<dbReference type="GeneID" id="48850628"/>
<dbReference type="KEGG" id="plu:plu4413"/>
<dbReference type="eggNOG" id="COG2226">
    <property type="taxonomic scope" value="Bacteria"/>
</dbReference>
<dbReference type="HOGENOM" id="CLU_037990_0_0_6"/>
<dbReference type="OrthoDB" id="9808140at2"/>
<dbReference type="UniPathway" id="UPA00079">
    <property type="reaction ID" value="UER00169"/>
</dbReference>
<dbReference type="UniPathway" id="UPA00232"/>
<dbReference type="Proteomes" id="UP000002514">
    <property type="component" value="Chromosome"/>
</dbReference>
<dbReference type="GO" id="GO:0008425">
    <property type="term" value="F:2-methoxy-6-polyprenyl-1,4-benzoquinol methyltransferase activity"/>
    <property type="evidence" value="ECO:0007669"/>
    <property type="project" value="UniProtKB-UniRule"/>
</dbReference>
<dbReference type="GO" id="GO:0043770">
    <property type="term" value="F:demethylmenaquinone methyltransferase activity"/>
    <property type="evidence" value="ECO:0007669"/>
    <property type="project" value="UniProtKB-UniRule"/>
</dbReference>
<dbReference type="GO" id="GO:0009060">
    <property type="term" value="P:aerobic respiration"/>
    <property type="evidence" value="ECO:0007669"/>
    <property type="project" value="UniProtKB-UniRule"/>
</dbReference>
<dbReference type="GO" id="GO:0009234">
    <property type="term" value="P:menaquinone biosynthetic process"/>
    <property type="evidence" value="ECO:0007669"/>
    <property type="project" value="UniProtKB-UniRule"/>
</dbReference>
<dbReference type="GO" id="GO:0032259">
    <property type="term" value="P:methylation"/>
    <property type="evidence" value="ECO:0007669"/>
    <property type="project" value="UniProtKB-KW"/>
</dbReference>
<dbReference type="CDD" id="cd02440">
    <property type="entry name" value="AdoMet_MTases"/>
    <property type="match status" value="1"/>
</dbReference>
<dbReference type="FunFam" id="3.40.50.150:FF:000014">
    <property type="entry name" value="Ubiquinone/menaquinone biosynthesis C-methyltransferase UbiE"/>
    <property type="match status" value="1"/>
</dbReference>
<dbReference type="Gene3D" id="3.40.50.150">
    <property type="entry name" value="Vaccinia Virus protein VP39"/>
    <property type="match status" value="1"/>
</dbReference>
<dbReference type="HAMAP" id="MF_01813">
    <property type="entry name" value="MenG_UbiE_methyltr"/>
    <property type="match status" value="1"/>
</dbReference>
<dbReference type="InterPro" id="IPR029063">
    <property type="entry name" value="SAM-dependent_MTases_sf"/>
</dbReference>
<dbReference type="InterPro" id="IPR004033">
    <property type="entry name" value="UbiE/COQ5_MeTrFase"/>
</dbReference>
<dbReference type="InterPro" id="IPR023576">
    <property type="entry name" value="UbiE/COQ5_MeTrFase_CS"/>
</dbReference>
<dbReference type="NCBIfam" id="TIGR01934">
    <property type="entry name" value="MenG_MenH_UbiE"/>
    <property type="match status" value="1"/>
</dbReference>
<dbReference type="NCBIfam" id="NF001240">
    <property type="entry name" value="PRK00216.1-1"/>
    <property type="match status" value="1"/>
</dbReference>
<dbReference type="NCBIfam" id="NF001242">
    <property type="entry name" value="PRK00216.1-3"/>
    <property type="match status" value="1"/>
</dbReference>
<dbReference type="NCBIfam" id="NF001244">
    <property type="entry name" value="PRK00216.1-5"/>
    <property type="match status" value="1"/>
</dbReference>
<dbReference type="PANTHER" id="PTHR43591:SF24">
    <property type="entry name" value="2-METHOXY-6-POLYPRENYL-1,4-BENZOQUINOL METHYLASE, MITOCHONDRIAL"/>
    <property type="match status" value="1"/>
</dbReference>
<dbReference type="PANTHER" id="PTHR43591">
    <property type="entry name" value="METHYLTRANSFERASE"/>
    <property type="match status" value="1"/>
</dbReference>
<dbReference type="Pfam" id="PF01209">
    <property type="entry name" value="Ubie_methyltran"/>
    <property type="match status" value="1"/>
</dbReference>
<dbReference type="SUPFAM" id="SSF53335">
    <property type="entry name" value="S-adenosyl-L-methionine-dependent methyltransferases"/>
    <property type="match status" value="1"/>
</dbReference>
<dbReference type="PROSITE" id="PS51608">
    <property type="entry name" value="SAM_MT_UBIE"/>
    <property type="match status" value="1"/>
</dbReference>
<dbReference type="PROSITE" id="PS01183">
    <property type="entry name" value="UBIE_1"/>
    <property type="match status" value="1"/>
</dbReference>
<dbReference type="PROSITE" id="PS01184">
    <property type="entry name" value="UBIE_2"/>
    <property type="match status" value="1"/>
</dbReference>
<feature type="chain" id="PRO_0000193307" description="Ubiquinone/menaquinone biosynthesis C-methyltransferase UbiE">
    <location>
        <begin position="1"/>
        <end position="251"/>
    </location>
</feature>
<feature type="binding site" evidence="1">
    <location>
        <position position="74"/>
    </location>
    <ligand>
        <name>S-adenosyl-L-methionine</name>
        <dbReference type="ChEBI" id="CHEBI:59789"/>
    </ligand>
</feature>
<feature type="binding site" evidence="1">
    <location>
        <position position="95"/>
    </location>
    <ligand>
        <name>S-adenosyl-L-methionine</name>
        <dbReference type="ChEBI" id="CHEBI:59789"/>
    </ligand>
</feature>
<feature type="binding site" evidence="1">
    <location>
        <begin position="123"/>
        <end position="124"/>
    </location>
    <ligand>
        <name>S-adenosyl-L-methionine</name>
        <dbReference type="ChEBI" id="CHEBI:59789"/>
    </ligand>
</feature>
<feature type="binding site" evidence="1">
    <location>
        <position position="140"/>
    </location>
    <ligand>
        <name>S-adenosyl-L-methionine</name>
        <dbReference type="ChEBI" id="CHEBI:59789"/>
    </ligand>
</feature>
<evidence type="ECO:0000255" key="1">
    <source>
        <dbReference type="HAMAP-Rule" id="MF_01813"/>
    </source>
</evidence>
<gene>
    <name evidence="1" type="primary">ubiE</name>
    <name type="ordered locus">plu4413</name>
</gene>
<comment type="function">
    <text evidence="1">Methyltransferase required for the conversion of demethylmenaquinol (DMKH2) to menaquinol (MKH2) and the conversion of 2-polyprenyl-6-methoxy-1,4-benzoquinol (DDMQH2) to 2-polyprenyl-3-methyl-6-methoxy-1,4-benzoquinol (DMQH2).</text>
</comment>
<comment type="catalytic activity">
    <reaction evidence="1">
        <text>a 2-demethylmenaquinol + S-adenosyl-L-methionine = a menaquinol + S-adenosyl-L-homocysteine + H(+)</text>
        <dbReference type="Rhea" id="RHEA:42640"/>
        <dbReference type="Rhea" id="RHEA-COMP:9539"/>
        <dbReference type="Rhea" id="RHEA-COMP:9563"/>
        <dbReference type="ChEBI" id="CHEBI:15378"/>
        <dbReference type="ChEBI" id="CHEBI:18151"/>
        <dbReference type="ChEBI" id="CHEBI:55437"/>
        <dbReference type="ChEBI" id="CHEBI:57856"/>
        <dbReference type="ChEBI" id="CHEBI:59789"/>
        <dbReference type="EC" id="2.1.1.163"/>
    </reaction>
</comment>
<comment type="catalytic activity">
    <reaction evidence="1">
        <text>a 2-methoxy-6-(all-trans-polyprenyl)benzene-1,4-diol + S-adenosyl-L-methionine = a 5-methoxy-2-methyl-3-(all-trans-polyprenyl)benzene-1,4-diol + S-adenosyl-L-homocysteine + H(+)</text>
        <dbReference type="Rhea" id="RHEA:28286"/>
        <dbReference type="Rhea" id="RHEA-COMP:10858"/>
        <dbReference type="Rhea" id="RHEA-COMP:10859"/>
        <dbReference type="ChEBI" id="CHEBI:15378"/>
        <dbReference type="ChEBI" id="CHEBI:57856"/>
        <dbReference type="ChEBI" id="CHEBI:59789"/>
        <dbReference type="ChEBI" id="CHEBI:84166"/>
        <dbReference type="ChEBI" id="CHEBI:84167"/>
        <dbReference type="EC" id="2.1.1.201"/>
    </reaction>
</comment>
<comment type="pathway">
    <text evidence="1">Quinol/quinone metabolism; menaquinone biosynthesis; menaquinol from 1,4-dihydroxy-2-naphthoate: step 2/2.</text>
</comment>
<comment type="pathway">
    <text evidence="1">Cofactor biosynthesis; ubiquinone biosynthesis.</text>
</comment>
<comment type="similarity">
    <text evidence="1">Belongs to the class I-like SAM-binding methyltransferase superfamily. MenG/UbiE family.</text>
</comment>
<proteinExistence type="inferred from homology"/>
<protein>
    <recommendedName>
        <fullName evidence="1">Ubiquinone/menaquinone biosynthesis C-methyltransferase UbiE</fullName>
        <ecNumber evidence="1">2.1.1.163</ecNumber>
        <ecNumber evidence="1">2.1.1.201</ecNumber>
    </recommendedName>
    <alternativeName>
        <fullName evidence="1">2-methoxy-6-polyprenyl-1,4-benzoquinol methylase</fullName>
    </alternativeName>
    <alternativeName>
        <fullName evidence="1">Demethylmenaquinone methyltransferase</fullName>
    </alternativeName>
</protein>
<accession>Q7MZ81</accession>
<name>UBIE_PHOLL</name>
<reference key="1">
    <citation type="journal article" date="2003" name="Nat. Biotechnol.">
        <title>The genome sequence of the entomopathogenic bacterium Photorhabdus luminescens.</title>
        <authorList>
            <person name="Duchaud E."/>
            <person name="Rusniok C."/>
            <person name="Frangeul L."/>
            <person name="Buchrieser C."/>
            <person name="Givaudan A."/>
            <person name="Taourit S."/>
            <person name="Bocs S."/>
            <person name="Boursaux-Eude C."/>
            <person name="Chandler M."/>
            <person name="Charles J.-F."/>
            <person name="Dassa E."/>
            <person name="Derose R."/>
            <person name="Derzelle S."/>
            <person name="Freyssinet G."/>
            <person name="Gaudriault S."/>
            <person name="Medigue C."/>
            <person name="Lanois A."/>
            <person name="Powell K."/>
            <person name="Siguier P."/>
            <person name="Vincent R."/>
            <person name="Wingate V."/>
            <person name="Zouine M."/>
            <person name="Glaser P."/>
            <person name="Boemare N."/>
            <person name="Danchin A."/>
            <person name="Kunst F."/>
        </authorList>
    </citation>
    <scope>NUCLEOTIDE SEQUENCE [LARGE SCALE GENOMIC DNA]</scope>
    <source>
        <strain>DSM 15139 / CIP 105565 / TT01</strain>
    </source>
</reference>
<keyword id="KW-0474">Menaquinone biosynthesis</keyword>
<keyword id="KW-0489">Methyltransferase</keyword>
<keyword id="KW-1185">Reference proteome</keyword>
<keyword id="KW-0949">S-adenosyl-L-methionine</keyword>
<keyword id="KW-0808">Transferase</keyword>
<keyword id="KW-0831">Ubiquinone biosynthesis</keyword>
<organism>
    <name type="scientific">Photorhabdus laumondii subsp. laumondii (strain DSM 15139 / CIP 105565 / TT01)</name>
    <name type="common">Photorhabdus luminescens subsp. laumondii</name>
    <dbReference type="NCBI Taxonomy" id="243265"/>
    <lineage>
        <taxon>Bacteria</taxon>
        <taxon>Pseudomonadati</taxon>
        <taxon>Pseudomonadota</taxon>
        <taxon>Gammaproteobacteria</taxon>
        <taxon>Enterobacterales</taxon>
        <taxon>Morganellaceae</taxon>
        <taxon>Photorhabdus</taxon>
    </lineage>
</organism>
<sequence>MVDQTKQTTHFGFRTVAKDEKAGMVAEVFHSVAAKYDLMNDLMSFGIHRIWKRVAIDASGVRRGQRILDLAGGTGDLTAKFSRIVGEKGEVVLADINESMLKVGREKLRDVGIVGNVSYVQANAEALPFPDNYFNCITISFGLRNVTEKEKALRSMFRVLKPGGRLLVLEFSKPLFAPLSKAYDAYSFHVLPKIGQVFVQDAGSYRYLAESIRMHPDQDTLKTMMEEAGFEQVTYTNMTGGIVALHRGFKF</sequence>